<comment type="function">
    <text evidence="1">Catalyzes the formation of the alpha-1,6-glucosidic linkages in glycogen by scission of a 1,4-alpha-linked oligosaccharide from growing alpha-1,4-glucan chains and the subsequent attachment of the oligosaccharide to the alpha-1,6 position.</text>
</comment>
<comment type="catalytic activity">
    <reaction evidence="1">
        <text>Transfers a segment of a (1-&gt;4)-alpha-D-glucan chain to a primary hydroxy group in a similar glucan chain.</text>
        <dbReference type="EC" id="2.4.1.18"/>
    </reaction>
</comment>
<comment type="pathway">
    <text evidence="1">Glycan biosynthesis; glycogen biosynthesis.</text>
</comment>
<comment type="subunit">
    <text evidence="1">Monomer.</text>
</comment>
<comment type="similarity">
    <text evidence="1">Belongs to the glycosyl hydrolase 13 family. GlgB subfamily.</text>
</comment>
<name>GLGB_FRATO</name>
<proteinExistence type="inferred from homology"/>
<organism>
    <name type="scientific">Francisella tularensis subsp. holarctica (strain OSU18)</name>
    <dbReference type="NCBI Taxonomy" id="393011"/>
    <lineage>
        <taxon>Bacteria</taxon>
        <taxon>Pseudomonadati</taxon>
        <taxon>Pseudomonadota</taxon>
        <taxon>Gammaproteobacteria</taxon>
        <taxon>Thiotrichales</taxon>
        <taxon>Francisellaceae</taxon>
        <taxon>Francisella</taxon>
    </lineage>
</organism>
<keyword id="KW-0119">Carbohydrate metabolism</keyword>
<keyword id="KW-0320">Glycogen biosynthesis</keyword>
<keyword id="KW-0321">Glycogen metabolism</keyword>
<keyword id="KW-0328">Glycosyltransferase</keyword>
<keyword id="KW-0808">Transferase</keyword>
<protein>
    <recommendedName>
        <fullName evidence="1">1,4-alpha-glucan branching enzyme GlgB</fullName>
        <ecNumber evidence="1">2.4.1.18</ecNumber>
    </recommendedName>
    <alternativeName>
        <fullName evidence="1">1,4-alpha-D-glucan:1,4-alpha-D-glucan 6-glucosyl-transferase</fullName>
    </alternativeName>
    <alternativeName>
        <fullName evidence="1">Alpha-(1-&gt;4)-glucan branching enzyme</fullName>
    </alternativeName>
    <alternativeName>
        <fullName evidence="1">Glycogen branching enzyme</fullName>
        <shortName evidence="1">BE</shortName>
    </alternativeName>
</protein>
<reference key="1">
    <citation type="journal article" date="2006" name="J. Bacteriol.">
        <title>Chromosome rearrangement and diversification of Francisella tularensis revealed by the type B (OSU18) genome sequence.</title>
        <authorList>
            <person name="Petrosino J.F."/>
            <person name="Xiang Q."/>
            <person name="Karpathy S.E."/>
            <person name="Jiang H."/>
            <person name="Yerrapragada S."/>
            <person name="Liu Y."/>
            <person name="Gioia J."/>
            <person name="Hemphill L."/>
            <person name="Gonzalez A."/>
            <person name="Raghavan T.M."/>
            <person name="Uzman A."/>
            <person name="Fox G.E."/>
            <person name="Highlander S."/>
            <person name="Reichard M."/>
            <person name="Morton R.J."/>
            <person name="Clinkenbeard K.D."/>
            <person name="Weinstock G.M."/>
        </authorList>
    </citation>
    <scope>NUCLEOTIDE SEQUENCE [LARGE SCALE GENOMIC DNA]</scope>
    <source>
        <strain>OSU18</strain>
    </source>
</reference>
<evidence type="ECO:0000255" key="1">
    <source>
        <dbReference type="HAMAP-Rule" id="MF_00685"/>
    </source>
</evidence>
<feature type="chain" id="PRO_0000260656" description="1,4-alpha-glucan branching enzyme GlgB">
    <location>
        <begin position="1"/>
        <end position="640"/>
    </location>
</feature>
<feature type="active site" description="Nucleophile" evidence="1">
    <location>
        <position position="318"/>
    </location>
</feature>
<feature type="active site" description="Proton donor" evidence="1">
    <location>
        <position position="371"/>
    </location>
</feature>
<gene>
    <name evidence="1" type="primary">glgB</name>
    <name type="ordered locus">FTH_0481</name>
</gene>
<dbReference type="EC" id="2.4.1.18" evidence="1"/>
<dbReference type="EMBL" id="CP000437">
    <property type="protein sequence ID" value="ABI82467.1"/>
    <property type="molecule type" value="Genomic_DNA"/>
</dbReference>
<dbReference type="RefSeq" id="WP_003018016.1">
    <property type="nucleotide sequence ID" value="NC_017463.1"/>
</dbReference>
<dbReference type="SMR" id="Q0BN67"/>
<dbReference type="CAZy" id="CBM48">
    <property type="family name" value="Carbohydrate-Binding Module Family 48"/>
</dbReference>
<dbReference type="CAZy" id="GH13">
    <property type="family name" value="Glycoside Hydrolase Family 13"/>
</dbReference>
<dbReference type="KEGG" id="fth:FTH_0481"/>
<dbReference type="UniPathway" id="UPA00164"/>
<dbReference type="GO" id="GO:0005829">
    <property type="term" value="C:cytosol"/>
    <property type="evidence" value="ECO:0007669"/>
    <property type="project" value="TreeGrafter"/>
</dbReference>
<dbReference type="GO" id="GO:0003844">
    <property type="term" value="F:1,4-alpha-glucan branching enzyme activity"/>
    <property type="evidence" value="ECO:0007669"/>
    <property type="project" value="UniProtKB-UniRule"/>
</dbReference>
<dbReference type="GO" id="GO:0043169">
    <property type="term" value="F:cation binding"/>
    <property type="evidence" value="ECO:0007669"/>
    <property type="project" value="InterPro"/>
</dbReference>
<dbReference type="GO" id="GO:0004553">
    <property type="term" value="F:hydrolase activity, hydrolyzing O-glycosyl compounds"/>
    <property type="evidence" value="ECO:0007669"/>
    <property type="project" value="InterPro"/>
</dbReference>
<dbReference type="GO" id="GO:0005978">
    <property type="term" value="P:glycogen biosynthetic process"/>
    <property type="evidence" value="ECO:0007669"/>
    <property type="project" value="UniProtKB-UniRule"/>
</dbReference>
<dbReference type="CDD" id="cd11322">
    <property type="entry name" value="AmyAc_Glg_BE"/>
    <property type="match status" value="1"/>
</dbReference>
<dbReference type="CDD" id="cd02855">
    <property type="entry name" value="E_set_GBE_prok_N"/>
    <property type="match status" value="1"/>
</dbReference>
<dbReference type="FunFam" id="2.60.40.1180:FF:000002">
    <property type="entry name" value="1,4-alpha-glucan branching enzyme GlgB"/>
    <property type="match status" value="1"/>
</dbReference>
<dbReference type="FunFam" id="3.20.20.80:FF:000003">
    <property type="entry name" value="1,4-alpha-glucan branching enzyme GlgB"/>
    <property type="match status" value="1"/>
</dbReference>
<dbReference type="Gene3D" id="3.20.20.80">
    <property type="entry name" value="Glycosidases"/>
    <property type="match status" value="1"/>
</dbReference>
<dbReference type="Gene3D" id="2.60.40.1180">
    <property type="entry name" value="Golgi alpha-mannosidase II"/>
    <property type="match status" value="1"/>
</dbReference>
<dbReference type="Gene3D" id="2.60.40.10">
    <property type="entry name" value="Immunoglobulins"/>
    <property type="match status" value="1"/>
</dbReference>
<dbReference type="HAMAP" id="MF_00685">
    <property type="entry name" value="GlgB"/>
    <property type="match status" value="1"/>
</dbReference>
<dbReference type="InterPro" id="IPR006048">
    <property type="entry name" value="A-amylase/branching_C"/>
</dbReference>
<dbReference type="InterPro" id="IPR037439">
    <property type="entry name" value="Branching_enzy"/>
</dbReference>
<dbReference type="InterPro" id="IPR006407">
    <property type="entry name" value="GlgB"/>
</dbReference>
<dbReference type="InterPro" id="IPR044143">
    <property type="entry name" value="GlgB_N_E_set_prok"/>
</dbReference>
<dbReference type="InterPro" id="IPR006047">
    <property type="entry name" value="Glyco_hydro_13_cat_dom"/>
</dbReference>
<dbReference type="InterPro" id="IPR004193">
    <property type="entry name" value="Glyco_hydro_13_N"/>
</dbReference>
<dbReference type="InterPro" id="IPR013780">
    <property type="entry name" value="Glyco_hydro_b"/>
</dbReference>
<dbReference type="InterPro" id="IPR017853">
    <property type="entry name" value="Glycoside_hydrolase_SF"/>
</dbReference>
<dbReference type="InterPro" id="IPR013783">
    <property type="entry name" value="Ig-like_fold"/>
</dbReference>
<dbReference type="InterPro" id="IPR014756">
    <property type="entry name" value="Ig_E-set"/>
</dbReference>
<dbReference type="NCBIfam" id="TIGR01515">
    <property type="entry name" value="branching_enzym"/>
    <property type="match status" value="1"/>
</dbReference>
<dbReference type="NCBIfam" id="NF003811">
    <property type="entry name" value="PRK05402.1"/>
    <property type="match status" value="1"/>
</dbReference>
<dbReference type="NCBIfam" id="NF008967">
    <property type="entry name" value="PRK12313.1"/>
    <property type="match status" value="1"/>
</dbReference>
<dbReference type="PANTHER" id="PTHR43651">
    <property type="entry name" value="1,4-ALPHA-GLUCAN-BRANCHING ENZYME"/>
    <property type="match status" value="1"/>
</dbReference>
<dbReference type="PANTHER" id="PTHR43651:SF3">
    <property type="entry name" value="1,4-ALPHA-GLUCAN-BRANCHING ENZYME"/>
    <property type="match status" value="1"/>
</dbReference>
<dbReference type="Pfam" id="PF00128">
    <property type="entry name" value="Alpha-amylase"/>
    <property type="match status" value="2"/>
</dbReference>
<dbReference type="Pfam" id="PF02806">
    <property type="entry name" value="Alpha-amylase_C"/>
    <property type="match status" value="1"/>
</dbReference>
<dbReference type="Pfam" id="PF02922">
    <property type="entry name" value="CBM_48"/>
    <property type="match status" value="1"/>
</dbReference>
<dbReference type="PIRSF" id="PIRSF000463">
    <property type="entry name" value="GlgB"/>
    <property type="match status" value="1"/>
</dbReference>
<dbReference type="SMART" id="SM00642">
    <property type="entry name" value="Aamy"/>
    <property type="match status" value="1"/>
</dbReference>
<dbReference type="SUPFAM" id="SSF51445">
    <property type="entry name" value="(Trans)glycosidases"/>
    <property type="match status" value="1"/>
</dbReference>
<dbReference type="SUPFAM" id="SSF81296">
    <property type="entry name" value="E set domains"/>
    <property type="match status" value="1"/>
</dbReference>
<dbReference type="SUPFAM" id="SSF51011">
    <property type="entry name" value="Glycosyl hydrolase domain"/>
    <property type="match status" value="1"/>
</dbReference>
<sequence>MKNKNSEQNTHYTIGEQDIHYFHEGKHIYAYEFMGAHKACEEGIEGIRFTTWAPNAKSICVIGDFNYWQVEDKNYMEPITDAGLWSVFIPNAKNGDKYKFVVTNKDTSHYVYKSDPYAFFSELRPNTASIITTETQYTWSDDKWLEKRAKTNYYDNPMNVYELHLASWKTKNGKFLTYDELSETLPQYIKEMGYTHVEFMPLHEHPLDASWGYQPTGFYSVNSRHGDIIGLKRLVDKLHNNDIGVILDWVPGHFCKDQHGLIYFDGSPCYEYQEPTKAINKGWETHNFDLGRNEVKCFLISNAMYWINEFHIDGLRVDAVSNILYLNYDREDGQWIPNIYGGHENLEGIAFLKELNGVLKHTCKGVITIAEESSSWPDISTPVEKGGLGFDFKWNMGWMNDTLRYISLDPVYRKYHHNLITFSMVYHYSEKFILSISHDEVVHGKKSLINKMWGDLWNKYAGLRLYMSYMIGHPGKKLIFMGSEFVQFVEWREYEQLQWQVVDQYESHKQTLHFFKKLNDFYHNETALWQCDYDHHGFRWIDANNSQQSILSFIRSSKDNKQKLIFICNFTPVTYYDYHLGVPDAGSYKEVFNSDNLEFGGSGQVMATEIFSSPQSSHGFEQRITIKIPPMATLVLKLIK</sequence>
<accession>Q0BN67</accession>